<protein>
    <recommendedName>
        <fullName>Uncharacterized 37.2 kDa protein</fullName>
    </recommendedName>
    <alternativeName>
        <fullName>ORF3</fullName>
    </alternativeName>
</protein>
<name>YO03_BPL2</name>
<organismHost>
    <name type="scientific">Mycoplasma</name>
    <dbReference type="NCBI Taxonomy" id="2093"/>
</organismHost>
<dbReference type="EMBL" id="L13696">
    <property type="protein sequence ID" value="AAA87959.1"/>
    <property type="molecule type" value="Genomic_DNA"/>
</dbReference>
<dbReference type="RefSeq" id="NP_040811.1">
    <property type="nucleotide sequence ID" value="NC_001447.1"/>
</dbReference>
<dbReference type="GeneID" id="1261019"/>
<dbReference type="KEGG" id="vg:1261019"/>
<dbReference type="Proteomes" id="UP000001573">
    <property type="component" value="Genome"/>
</dbReference>
<accession>P42538</accession>
<keyword id="KW-1185">Reference proteome</keyword>
<proteinExistence type="predicted"/>
<feature type="chain" id="PRO_0000066350" description="Uncharacterized 37.2 kDa protein">
    <location>
        <begin position="1"/>
        <end position="312"/>
    </location>
</feature>
<reference key="1">
    <citation type="journal article" date="1994" name="Gene">
        <title>Sequence analysis of a unique temperature phage: mycoplasma virus L2.</title>
        <authorList>
            <person name="Maniloff J."/>
            <person name="Kampo G.J."/>
            <person name="Dascher C.C."/>
        </authorList>
    </citation>
    <scope>NUCLEOTIDE SEQUENCE [LARGE SCALE GENOMIC DNA]</scope>
</reference>
<sequence length="312" mass="37160">MEKFIDSFFNKFDSGVHLLTKLLDAFFHVQKSLMDILSDIIFKTIGLFVEFTKRIYKFFRWSTIPINFIIVRVWWLWYIFRFEDYDPLINPGVHYIRALPGGGKSLLGYQLANTIMDETGYSSYISAKLEKPKITPDGKYYYVNHQVIDIKSYYKNGKKVKRFNTEKFKSLILDEFHVLNNQRLNMQKENKDFFIPFINDLVLLRHQGFSNNIYLLSQIPNNDVQIMSILAGYHELSLKKGVSYWQFIKTGKLRIVPLRIKIKHYSIEWNDSGVSKKRLIRTTNRKVDLERLEYFDTLAERDRDKDLPLDFK</sequence>
<organism>
    <name type="scientific">Acholeplasma phage L2</name>
    <name type="common">Bacteriophage L2</name>
    <dbReference type="NCBI Taxonomy" id="46014"/>
    <lineage>
        <taxon>Viruses</taxon>
        <taxon>Viruses incertae sedis</taxon>
        <taxon>Plasmaviridae</taxon>
        <taxon>Plasmavirus</taxon>
    </lineage>
</organism>